<comment type="function">
    <text evidence="2 3 7 13">Subunit OSCP, of the mitochondrial membrane ATP synthase complex (F(1)F(0) ATP synthase or Complex V) that produces ATP from ADP in the presence of a proton gradient across the membrane which is generated by electron transport complexes of the respiratory chain (PubMed:37244256). ATP synthase complex consist of a soluble F(1) head domain - the catalytic core - and a membrane F(1) domain - the membrane proton channel (PubMed:37244256). These two domains are linked by a central stalk rotating inside the F(1) region and a stationary peripheral stalk (PubMed:37244256). During catalysis, ATP synthesis in the catalytic domain of F(1) is coupled via a rotary mechanism of the central stalk subunits to proton translocation (Probable). In vivo, can only synthesize ATP although its ATP hydrolase activity can be activated artificially in vitro (By similarity). Part of the complex F(0) domain (PubMed:37244256). Part of the complex F(0) domain and the peripheric stalk, which acts as a stator to hold the catalytic alpha(3)beta(3) subcomplex and subunit a/ATP6 static relative to the rotary elements (By similarity).</text>
</comment>
<comment type="subunit">
    <text evidence="7">Component of the ATP synthase complex composed at least of ATP5F1A/subunit alpha, ATP5F1B/subunit beta, ATP5MC1/subunit c (homooctomer), MT-ATP6/subunit a, MT-ATP8/subunit 8, ATP5ME/subunit e, ATP5MF/subunit f, ATP5MG/subunit g, ATP5MK/subunit k, ATP5MJ/subunit j, ATP5F1C/subunit gamma, ATP5F1D/subunit delta, ATP5F1E/subunit epsilon, ATP5PF/subunit F6, ATP5PB/subunit b, ATP5PD/subunit d, ATP5PO/subunit OSCP (PubMed:37244256). ATP synthase complex consists of a soluble F(1) head domain (subunits alpha(3) and beta(3)) - the catalytic core - and a membrane F(0) domain - the membrane proton channel (subunits c, a, 8, e, f, g, k and j) (PubMed:37244256). These two domains are linked by a central stalk (subunits gamma, delta, and epsilon) rotating inside the F1 region and a stationary peripheral stalk (subunits F6, b, d, and OSCP) (PubMed:37244256).</text>
</comment>
<comment type="interaction">
    <interactant intactId="EBI-355815">
        <id>P48047</id>
    </interactant>
    <interactant intactId="EBI-821758">
        <id>PRO_0000000092</id>
        <label>APP</label>
        <dbReference type="UniProtKB" id="P05067"/>
    </interactant>
    <organismsDiffer>false</organismsDiffer>
    <experiments>2</experiments>
</comment>
<comment type="interaction">
    <interactant intactId="EBI-355815">
        <id>P48047</id>
    </interactant>
    <interactant intactId="EBI-351437">
        <id>P25705</id>
        <label>ATP5F1A</label>
    </interactant>
    <organismsDiffer>false</organismsDiffer>
    <experiments>5</experiments>
</comment>
<comment type="interaction">
    <interactant intactId="EBI-355815">
        <id>P48047</id>
    </interactant>
    <interactant intactId="EBI-10171416">
        <id>Q96JN2-2</id>
        <label>CCDC136</label>
    </interactant>
    <organismsDiffer>false</organismsDiffer>
    <experiments>3</experiments>
</comment>
<comment type="interaction">
    <interactant intactId="EBI-355815">
        <id>P48047</id>
    </interactant>
    <interactant intactId="EBI-739624">
        <id>Q8NHQ1</id>
        <label>CEP70</label>
    </interactant>
    <organismsDiffer>false</organismsDiffer>
    <experiments>6</experiments>
</comment>
<comment type="interaction">
    <interactant intactId="EBI-355815">
        <id>P48047</id>
    </interactant>
    <interactant intactId="EBI-618309">
        <id>Q08379</id>
        <label>GOLGA2</label>
    </interactant>
    <organismsDiffer>false</organismsDiffer>
    <experiments>3</experiments>
</comment>
<comment type="interaction">
    <interactant intactId="EBI-355815">
        <id>P48047</id>
    </interactant>
    <interactant intactId="EBI-2549423">
        <id>Q6NT76</id>
        <label>HMBOX1</label>
    </interactant>
    <organismsDiffer>false</organismsDiffer>
    <experiments>3</experiments>
</comment>
<comment type="interaction">
    <interactant intactId="EBI-355815">
        <id>P48047</id>
    </interactant>
    <interactant intactId="EBI-466029">
        <id>P42858</id>
        <label>HTT</label>
    </interactant>
    <organismsDiffer>false</organismsDiffer>
    <experiments>6</experiments>
</comment>
<comment type="interaction">
    <interactant intactId="EBI-355815">
        <id>P48047</id>
    </interactant>
    <interactant intactId="EBI-10171552">
        <id>A1A4E9</id>
        <label>KRT13</label>
    </interactant>
    <organismsDiffer>false</organismsDiffer>
    <experiments>3</experiments>
</comment>
<comment type="interaction">
    <interactant intactId="EBI-355815">
        <id>P48047</id>
    </interactant>
    <interactant intactId="EBI-739566">
        <id>P19012</id>
        <label>KRT15</label>
    </interactant>
    <organismsDiffer>false</organismsDiffer>
    <experiments>3</experiments>
</comment>
<comment type="interaction">
    <interactant intactId="EBI-355815">
        <id>P48047</id>
    </interactant>
    <interactant intactId="EBI-2548751">
        <id>Q8TD10</id>
        <label>MIPOL1</label>
    </interactant>
    <organismsDiffer>false</organismsDiffer>
    <experiments>3</experiments>
</comment>
<comment type="interaction">
    <interactant intactId="EBI-355815">
        <id>P48047</id>
    </interactant>
    <interactant intactId="EBI-715849">
        <id>O14777</id>
        <label>NDC80</label>
    </interactant>
    <organismsDiffer>false</organismsDiffer>
    <experiments>3</experiments>
</comment>
<comment type="interaction">
    <interactant intactId="EBI-355815">
        <id>P48047</id>
    </interactant>
    <interactant intactId="EBI-742084">
        <id>P49902</id>
        <label>NT5C2</label>
    </interactant>
    <organismsDiffer>false</organismsDiffer>
    <experiments>3</experiments>
</comment>
<comment type="interaction">
    <interactant intactId="EBI-355815">
        <id>P48047</id>
    </interactant>
    <interactant intactId="EBI-302345">
        <id>Q8ND90</id>
        <label>PNMA1</label>
    </interactant>
    <organismsDiffer>false</organismsDiffer>
    <experiments>4</experiments>
</comment>
<comment type="interaction">
    <interactant intactId="EBI-355815">
        <id>P48047</id>
    </interactant>
    <interactant intactId="EBI-716596">
        <id>Q08752</id>
        <label>PPID</label>
    </interactant>
    <organismsDiffer>false</organismsDiffer>
    <experiments>3</experiments>
</comment>
<comment type="interaction">
    <interactant intactId="EBI-355815">
        <id>P48047</id>
    </interactant>
    <interactant intactId="EBI-10301068">
        <id>Q9BXU3</id>
        <label>TEX13A</label>
    </interactant>
    <organismsDiffer>false</organismsDiffer>
    <experiments>3</experiments>
</comment>
<comment type="interaction">
    <interactant intactId="EBI-355815">
        <id>P48047</id>
    </interactant>
    <interactant intactId="EBI-1105213">
        <id>Q9UBB9</id>
        <label>TFIP11</label>
    </interactant>
    <organismsDiffer>false</organismsDiffer>
    <experiments>3</experiments>
</comment>
<comment type="interaction">
    <interactant intactId="EBI-355815">
        <id>P48047</id>
    </interactant>
    <interactant intactId="EBI-742327">
        <id>Q15654</id>
        <label>TRIP6</label>
    </interactant>
    <organismsDiffer>false</organismsDiffer>
    <experiments>3</experiments>
</comment>
<comment type="interaction">
    <interactant intactId="EBI-355815">
        <id>P48047</id>
    </interactant>
    <interactant intactId="EBI-739895">
        <id>Q8N6Y0</id>
        <label>USHBP1</label>
    </interactant>
    <organismsDiffer>false</organismsDiffer>
    <experiments>3</experiments>
</comment>
<comment type="interaction">
    <interactant intactId="EBI-355815">
        <id>P48047</id>
    </interactant>
    <interactant intactId="EBI-10176632">
        <id>O43829</id>
        <label>ZBTB14</label>
    </interactant>
    <organismsDiffer>false</organismsDiffer>
    <experiments>3</experiments>
</comment>
<comment type="interaction">
    <interactant intactId="EBI-355815">
        <id>P48047</id>
    </interactant>
    <interactant intactId="EBI-7254550">
        <id>P36508</id>
        <label>ZNF76</label>
    </interactant>
    <organismsDiffer>false</organismsDiffer>
    <experiments>3</experiments>
</comment>
<comment type="subcellular location">
    <subcellularLocation>
        <location evidence="1">Mitochondrion</location>
    </subcellularLocation>
    <subcellularLocation>
        <location evidence="1">Mitochondrion inner membrane</location>
    </subcellularLocation>
</comment>
<comment type="PTM">
    <text evidence="9">Acetylation at Lys-162 decreases ATP production. Deacetylated by SIRT3.</text>
</comment>
<comment type="PTM">
    <text evidence="8">In response to mitochondrial stress, the precursor protein is ubiquitinated by the SIFI complex in the cytoplasm before mitochondrial import, leading to its degradation (PubMed:38297121). Within the SIFI complex, UBR4 initiates ubiquitin chain that are further elongated or branched by KCMF1 (PubMed:38297121).</text>
</comment>
<comment type="disease" evidence="6">
    <disease id="DI-06675">
        <name>Mitochondrial complex V deficiency, nuclear type 7</name>
        <acronym>MC5DN7</acronym>
        <description>An autosomal recessive, severe, mitochondrial disorder apparent soon after birth. It is characterized by multisystemic features that include hypotonia, developmental delay, progressive epileptic encephalopathy, progressive cerebral atrophy, white matter abnormalities on brain imaging, and hypertrophic cardiomyopathy in some patients. Death in infancy or early childhood may occur.</description>
        <dbReference type="MIM" id="620359"/>
    </disease>
    <text>The disease is caused by variants affecting the gene represented in this entry.</text>
</comment>
<comment type="similarity">
    <text evidence="12">Belongs to the ATPase delta chain family.</text>
</comment>
<accession>P48047</accession>
<accession>B2R4E2</accession>
<accession>Q5U042</accession>
<accession>Q6IBI2</accession>
<sequence>MAAPAVSGLSRQVRCFSTSVVRPFAKLVRPPVQVYGIEGRYATALYSAASKQNKLEQVEKELLRVAQILKEPKVAASVLNPYVKRSIKVKSLNDITAKERFSPLTTNLINLLAENGRLSNTQGVVSAFSTMMSVHRGEVPCTVTSASPLEEATLSELKTVLKSFLSQGQVLKLEAKTDPSILGGMIVRIGEKYVDMSVKTKIQKLGRAMREIV</sequence>
<reference key="1">
    <citation type="journal article" date="1995" name="Genomics">
        <title>Cloning of the cDNA for the human ATP synthase OSCP subunit (ATP5O) by exon trapping and mapping to chromosome 21q22.1-q22.2.</title>
        <authorList>
            <person name="Chen H.M."/>
            <person name="Morris M.A."/>
            <person name="Rossier C."/>
            <person name="Blouin J.-L."/>
            <person name="Antonarakis S.E."/>
        </authorList>
    </citation>
    <scope>NUCLEOTIDE SEQUENCE [MRNA]</scope>
    <source>
        <tissue>Brain</tissue>
        <tissue>Muscle</tissue>
    </source>
</reference>
<reference key="2">
    <citation type="submission" date="2004-10" db="EMBL/GenBank/DDBJ databases">
        <title>Cloning of human full-length CDSs in BD Creator(TM) system donor vector.</title>
        <authorList>
            <person name="Kalnine N."/>
            <person name="Chen X."/>
            <person name="Rolfs A."/>
            <person name="Halleck A."/>
            <person name="Hines L."/>
            <person name="Eisenstein S."/>
            <person name="Koundinya M."/>
            <person name="Raphael J."/>
            <person name="Moreira D."/>
            <person name="Kelley T."/>
            <person name="LaBaer J."/>
            <person name="Lin Y."/>
            <person name="Phelan M."/>
            <person name="Farmer A."/>
        </authorList>
    </citation>
    <scope>NUCLEOTIDE SEQUENCE [LARGE SCALE MRNA]</scope>
    <scope>VARIANT ARG-98</scope>
</reference>
<reference key="3">
    <citation type="submission" date="2004-06" db="EMBL/GenBank/DDBJ databases">
        <title>Cloning of human full open reading frames in Gateway(TM) system entry vector (pDONR201).</title>
        <authorList>
            <person name="Ebert L."/>
            <person name="Schick M."/>
            <person name="Neubert P."/>
            <person name="Schatten R."/>
            <person name="Henze S."/>
            <person name="Korn B."/>
        </authorList>
    </citation>
    <scope>NUCLEOTIDE SEQUENCE [LARGE SCALE MRNA]</scope>
</reference>
<reference key="4">
    <citation type="journal article" date="2004" name="Nat. Genet.">
        <title>Complete sequencing and characterization of 21,243 full-length human cDNAs.</title>
        <authorList>
            <person name="Ota T."/>
            <person name="Suzuki Y."/>
            <person name="Nishikawa T."/>
            <person name="Otsuki T."/>
            <person name="Sugiyama T."/>
            <person name="Irie R."/>
            <person name="Wakamatsu A."/>
            <person name="Hayashi K."/>
            <person name="Sato H."/>
            <person name="Nagai K."/>
            <person name="Kimura K."/>
            <person name="Makita H."/>
            <person name="Sekine M."/>
            <person name="Obayashi M."/>
            <person name="Nishi T."/>
            <person name="Shibahara T."/>
            <person name="Tanaka T."/>
            <person name="Ishii S."/>
            <person name="Yamamoto J."/>
            <person name="Saito K."/>
            <person name="Kawai Y."/>
            <person name="Isono Y."/>
            <person name="Nakamura Y."/>
            <person name="Nagahari K."/>
            <person name="Murakami K."/>
            <person name="Yasuda T."/>
            <person name="Iwayanagi T."/>
            <person name="Wagatsuma M."/>
            <person name="Shiratori A."/>
            <person name="Sudo H."/>
            <person name="Hosoiri T."/>
            <person name="Kaku Y."/>
            <person name="Kodaira H."/>
            <person name="Kondo H."/>
            <person name="Sugawara M."/>
            <person name="Takahashi M."/>
            <person name="Kanda K."/>
            <person name="Yokoi T."/>
            <person name="Furuya T."/>
            <person name="Kikkawa E."/>
            <person name="Omura Y."/>
            <person name="Abe K."/>
            <person name="Kamihara K."/>
            <person name="Katsuta N."/>
            <person name="Sato K."/>
            <person name="Tanikawa M."/>
            <person name="Yamazaki M."/>
            <person name="Ninomiya K."/>
            <person name="Ishibashi T."/>
            <person name="Yamashita H."/>
            <person name="Murakawa K."/>
            <person name="Fujimori K."/>
            <person name="Tanai H."/>
            <person name="Kimata M."/>
            <person name="Watanabe M."/>
            <person name="Hiraoka S."/>
            <person name="Chiba Y."/>
            <person name="Ishida S."/>
            <person name="Ono Y."/>
            <person name="Takiguchi S."/>
            <person name="Watanabe S."/>
            <person name="Yosida M."/>
            <person name="Hotuta T."/>
            <person name="Kusano J."/>
            <person name="Kanehori K."/>
            <person name="Takahashi-Fujii A."/>
            <person name="Hara H."/>
            <person name="Tanase T.-O."/>
            <person name="Nomura Y."/>
            <person name="Togiya S."/>
            <person name="Komai F."/>
            <person name="Hara R."/>
            <person name="Takeuchi K."/>
            <person name="Arita M."/>
            <person name="Imose N."/>
            <person name="Musashino K."/>
            <person name="Yuuki H."/>
            <person name="Oshima A."/>
            <person name="Sasaki N."/>
            <person name="Aotsuka S."/>
            <person name="Yoshikawa Y."/>
            <person name="Matsunawa H."/>
            <person name="Ichihara T."/>
            <person name="Shiohata N."/>
            <person name="Sano S."/>
            <person name="Moriya S."/>
            <person name="Momiyama H."/>
            <person name="Satoh N."/>
            <person name="Takami S."/>
            <person name="Terashima Y."/>
            <person name="Suzuki O."/>
            <person name="Nakagawa S."/>
            <person name="Senoh A."/>
            <person name="Mizoguchi H."/>
            <person name="Goto Y."/>
            <person name="Shimizu F."/>
            <person name="Wakebe H."/>
            <person name="Hishigaki H."/>
            <person name="Watanabe T."/>
            <person name="Sugiyama A."/>
            <person name="Takemoto M."/>
            <person name="Kawakami B."/>
            <person name="Yamazaki M."/>
            <person name="Watanabe K."/>
            <person name="Kumagai A."/>
            <person name="Itakura S."/>
            <person name="Fukuzumi Y."/>
            <person name="Fujimori Y."/>
            <person name="Komiyama M."/>
            <person name="Tashiro H."/>
            <person name="Tanigami A."/>
            <person name="Fujiwara T."/>
            <person name="Ono T."/>
            <person name="Yamada K."/>
            <person name="Fujii Y."/>
            <person name="Ozaki K."/>
            <person name="Hirao M."/>
            <person name="Ohmori Y."/>
            <person name="Kawabata A."/>
            <person name="Hikiji T."/>
            <person name="Kobatake N."/>
            <person name="Inagaki H."/>
            <person name="Ikema Y."/>
            <person name="Okamoto S."/>
            <person name="Okitani R."/>
            <person name="Kawakami T."/>
            <person name="Noguchi S."/>
            <person name="Itoh T."/>
            <person name="Shigeta K."/>
            <person name="Senba T."/>
            <person name="Matsumura K."/>
            <person name="Nakajima Y."/>
            <person name="Mizuno T."/>
            <person name="Morinaga M."/>
            <person name="Sasaki M."/>
            <person name="Togashi T."/>
            <person name="Oyama M."/>
            <person name="Hata H."/>
            <person name="Watanabe M."/>
            <person name="Komatsu T."/>
            <person name="Mizushima-Sugano J."/>
            <person name="Satoh T."/>
            <person name="Shirai Y."/>
            <person name="Takahashi Y."/>
            <person name="Nakagawa K."/>
            <person name="Okumura K."/>
            <person name="Nagase T."/>
            <person name="Nomura N."/>
            <person name="Kikuchi H."/>
            <person name="Masuho Y."/>
            <person name="Yamashita R."/>
            <person name="Nakai K."/>
            <person name="Yada T."/>
            <person name="Nakamura Y."/>
            <person name="Ohara O."/>
            <person name="Isogai T."/>
            <person name="Sugano S."/>
        </authorList>
    </citation>
    <scope>NUCLEOTIDE SEQUENCE [LARGE SCALE MRNA]</scope>
    <source>
        <tissue>Testis</tissue>
    </source>
</reference>
<reference key="5">
    <citation type="submission" date="2005-04" db="EMBL/GenBank/DDBJ databases">
        <authorList>
            <person name="Suzuki Y."/>
            <person name="Sugano S."/>
            <person name="Totoki Y."/>
            <person name="Toyoda A."/>
            <person name="Takeda T."/>
            <person name="Sakaki Y."/>
            <person name="Tanaka A."/>
            <person name="Yokoyama S."/>
        </authorList>
    </citation>
    <scope>NUCLEOTIDE SEQUENCE [LARGE SCALE MRNA]</scope>
    <scope>VARIANT ARG-98</scope>
    <source>
        <tissue>Heart</tissue>
    </source>
</reference>
<reference key="6">
    <citation type="submission" date="2005-09" db="EMBL/GenBank/DDBJ databases">
        <authorList>
            <person name="Mural R.J."/>
            <person name="Istrail S."/>
            <person name="Sutton G.G."/>
            <person name="Florea L."/>
            <person name="Halpern A.L."/>
            <person name="Mobarry C.M."/>
            <person name="Lippert R."/>
            <person name="Walenz B."/>
            <person name="Shatkay H."/>
            <person name="Dew I."/>
            <person name="Miller J.R."/>
            <person name="Flanigan M.J."/>
            <person name="Edwards N.J."/>
            <person name="Bolanos R."/>
            <person name="Fasulo D."/>
            <person name="Halldorsson B.V."/>
            <person name="Hannenhalli S."/>
            <person name="Turner R."/>
            <person name="Yooseph S."/>
            <person name="Lu F."/>
            <person name="Nusskern D.R."/>
            <person name="Shue B.C."/>
            <person name="Zheng X.H."/>
            <person name="Zhong F."/>
            <person name="Delcher A.L."/>
            <person name="Huson D.H."/>
            <person name="Kravitz S.A."/>
            <person name="Mouchard L."/>
            <person name="Reinert K."/>
            <person name="Remington K.A."/>
            <person name="Clark A.G."/>
            <person name="Waterman M.S."/>
            <person name="Eichler E.E."/>
            <person name="Adams M.D."/>
            <person name="Hunkapiller M.W."/>
            <person name="Myers E.W."/>
            <person name="Venter J.C."/>
        </authorList>
    </citation>
    <scope>NUCLEOTIDE SEQUENCE [LARGE SCALE GENOMIC DNA]</scope>
</reference>
<reference key="7">
    <citation type="journal article" date="2004" name="Genome Res.">
        <title>The status, quality, and expansion of the NIH full-length cDNA project: the Mammalian Gene Collection (MGC).</title>
        <authorList>
            <consortium name="The MGC Project Team"/>
        </authorList>
    </citation>
    <scope>NUCLEOTIDE SEQUENCE [LARGE SCALE MRNA]</scope>
    <source>
        <tissue>Brain</tissue>
    </source>
</reference>
<reference key="8">
    <citation type="journal article" date="2003" name="Nat. Biotechnol.">
        <title>Exploring proteomes and analyzing protein processing by mass spectrometric identification of sorted N-terminal peptides.</title>
        <authorList>
            <person name="Gevaert K."/>
            <person name="Goethals M."/>
            <person name="Martens L."/>
            <person name="Van Damme J."/>
            <person name="Staes A."/>
            <person name="Thomas G.R."/>
            <person name="Vandekerckhove J."/>
        </authorList>
    </citation>
    <scope>PROTEIN SEQUENCE OF 24-40</scope>
    <source>
        <tissue>Platelet</tissue>
    </source>
</reference>
<reference key="9">
    <citation type="journal article" date="2009" name="Science">
        <title>Lysine acetylation targets protein complexes and co-regulates major cellular functions.</title>
        <authorList>
            <person name="Choudhary C."/>
            <person name="Kumar C."/>
            <person name="Gnad F."/>
            <person name="Nielsen M.L."/>
            <person name="Rehman M."/>
            <person name="Walther T.C."/>
            <person name="Olsen J.V."/>
            <person name="Mann M."/>
        </authorList>
    </citation>
    <scope>ACETYLATION [LARGE SCALE ANALYSIS] AT LYS-162; LYS-172 AND LYS-192</scope>
    <scope>IDENTIFICATION BY MASS SPECTROMETRY [LARGE SCALE ANALYSIS]</scope>
</reference>
<reference key="10">
    <citation type="journal article" date="2011" name="BMC Syst. Biol.">
        <title>Initial characterization of the human central proteome.</title>
        <authorList>
            <person name="Burkard T.R."/>
            <person name="Planyavsky M."/>
            <person name="Kaupe I."/>
            <person name="Breitwieser F.P."/>
            <person name="Buerckstuemmer T."/>
            <person name="Bennett K.L."/>
            <person name="Superti-Furga G."/>
            <person name="Colinge J."/>
        </authorList>
    </citation>
    <scope>IDENTIFICATION BY MASS SPECTROMETRY [LARGE SCALE ANALYSIS]</scope>
</reference>
<reference key="11">
    <citation type="journal article" date="2013" name="Antioxid. Redox Signal.">
        <title>SIRT3 deacetylates ATP synthase F1 complex proteins in response to nutrient and exercise-induced stress.</title>
        <authorList>
            <person name="Vassilopoulos A."/>
            <person name="Pennington D.J."/>
            <person name="Andresson T."/>
            <person name="Rees D."/>
            <person name="Fearnley I."/>
            <person name="Ham A."/>
            <person name="Yan Y."/>
            <person name="Flynn C.R."/>
            <person name="Jones K."/>
            <person name="Kim H.S."/>
            <person name="Deng C."/>
            <person name="Walker J."/>
            <person name="Gius D."/>
        </authorList>
    </citation>
    <scope>ACETYLATION AT LYS-162</scope>
    <scope>DEACETYLATION BY SIRT3</scope>
    <scope>MUTAGENESIS OF LYS-162</scope>
</reference>
<reference key="12">
    <citation type="journal article" date="2014" name="J. Proteomics">
        <title>An enzyme assisted RP-RPLC approach for in-depth analysis of human liver phosphoproteome.</title>
        <authorList>
            <person name="Bian Y."/>
            <person name="Song C."/>
            <person name="Cheng K."/>
            <person name="Dong M."/>
            <person name="Wang F."/>
            <person name="Huang J."/>
            <person name="Sun D."/>
            <person name="Wang L."/>
            <person name="Ye M."/>
            <person name="Zou H."/>
        </authorList>
    </citation>
    <scope>IDENTIFICATION BY MASS SPECTROMETRY [LARGE SCALE ANALYSIS]</scope>
    <source>
        <tissue>Liver</tissue>
    </source>
</reference>
<reference key="13">
    <citation type="journal article" date="2015" name="Proteomics">
        <title>N-terminome analysis of the human mitochondrial proteome.</title>
        <authorList>
            <person name="Vaca Jacome A.S."/>
            <person name="Rabilloud T."/>
            <person name="Schaeffer-Reiss C."/>
            <person name="Rompais M."/>
            <person name="Ayoub D."/>
            <person name="Lane L."/>
            <person name="Bairoch A."/>
            <person name="Van Dorsselaer A."/>
            <person name="Carapito C."/>
        </authorList>
    </citation>
    <scope>IDENTIFICATION BY MASS SPECTROMETRY [LARGE SCALE ANALYSIS]</scope>
</reference>
<reference key="14">
    <citation type="journal article" date="2024" name="Nature">
        <title>Stress response silencing by an E3 ligase mutated in neurodegeneration.</title>
        <authorList>
            <person name="Haakonsen D.L."/>
            <person name="Heider M."/>
            <person name="Ingersoll A.J."/>
            <person name="Vodehnal K."/>
            <person name="Witus S.R."/>
            <person name="Uenaka T."/>
            <person name="Wernig M."/>
            <person name="Rape M."/>
        </authorList>
    </citation>
    <scope>UBIQUITINATION</scope>
</reference>
<reference evidence="15 16 17 18 19 20 21 22" key="15">
    <citation type="journal article" date="2023" name="Mol. Cell">
        <title>Structure of the human ATP synthase.</title>
        <authorList>
            <person name="Lai Y."/>
            <person name="Zhang Y."/>
            <person name="Zhou S."/>
            <person name="Xu J."/>
            <person name="Du Z."/>
            <person name="Feng Z."/>
            <person name="Yu L."/>
            <person name="Zhao Z."/>
            <person name="Wang W."/>
            <person name="Tang Y."/>
            <person name="Yang X."/>
            <person name="Guddat L.W."/>
            <person name="Liu F."/>
            <person name="Gao Y."/>
            <person name="Rao Z."/>
            <person name="Gong H."/>
        </authorList>
    </citation>
    <scope>STRUCTURE BY ELECTRON MICROSCOPY (2.53 ANGSTROMS) OF 24-213</scope>
    <scope>IDENTIFICATION IN THE ATP SYNTHASE COMPLEX</scope>
    <scope>FUNCTION</scope>
    <scope>SUBUNIT</scope>
</reference>
<reference key="16">
    <citation type="journal article" date="2022" name="Ann. Neurol.">
        <title>Variants in Mitochondrial ATP Synthase Cause Variable Neurologic Phenotypes.</title>
        <authorList>
            <person name="Zech M."/>
            <person name="Kopajtich R."/>
            <person name="Steinbruecker K."/>
            <person name="Bris C."/>
            <person name="Gueguen N."/>
            <person name="Feichtinger R.G."/>
            <person name="Achleitner M.T."/>
            <person name="Duzkale N."/>
            <person name="Perivier M."/>
            <person name="Koch J."/>
            <person name="Engelhardt H."/>
            <person name="Freisinger P."/>
            <person name="Wagner M."/>
            <person name="Brunet T."/>
            <person name="Berutti R."/>
            <person name="Smirnov D."/>
            <person name="Navaratnarajah T."/>
            <person name="Rodenburg R.J.T."/>
            <person name="Pais L.S."/>
            <person name="Austin-Tse C."/>
            <person name="O'Leary M."/>
            <person name="Boesch S."/>
            <person name="Jech R."/>
            <person name="Bakhtiari S."/>
            <person name="Jin S.C."/>
            <person name="Wilbert F."/>
            <person name="Kruer M.C."/>
            <person name="Wortmann S.B."/>
            <person name="Eckenweiler M."/>
            <person name="Mayr J.A."/>
            <person name="Distelmaier F."/>
            <person name="Steinfeld R."/>
            <person name="Winkelmann J."/>
            <person name="Prokisch H."/>
        </authorList>
    </citation>
    <scope>INVOLVEMENT IN MC5DN7</scope>
    <scope>VARIANT MC5DN7 12-GLN--VAL-213 DEL</scope>
</reference>
<gene>
    <name evidence="14" type="primary">ATP5PO</name>
    <name type="synonym">ATP5O</name>
    <name type="synonym">ATPO</name>
</gene>
<proteinExistence type="evidence at protein level"/>
<feature type="transit peptide" description="Mitochondrion" evidence="5">
    <location>
        <begin position="1"/>
        <end position="23"/>
    </location>
</feature>
<feature type="chain" id="PRO_0000002646" description="ATP synthase peripheral stalk subunit OSCP, mitochondrial">
    <location>
        <begin position="24"/>
        <end position="213"/>
    </location>
</feature>
<feature type="short sequence motif" description="SIFI-degron" evidence="8">
    <location>
        <begin position="5"/>
        <end position="23"/>
    </location>
</feature>
<feature type="modified residue" description="N6-acetyllysine" evidence="4">
    <location>
        <position position="54"/>
    </location>
</feature>
<feature type="modified residue" description="N6-acetyllysine" evidence="4">
    <location>
        <position position="60"/>
    </location>
</feature>
<feature type="modified residue" description="N6-acetyllysine" evidence="4">
    <location>
        <position position="70"/>
    </location>
</feature>
<feature type="modified residue" description="N6-acetyllysine" evidence="4">
    <location>
        <position position="73"/>
    </location>
</feature>
<feature type="modified residue" description="N6-succinyllysine" evidence="4">
    <location>
        <position position="90"/>
    </location>
</feature>
<feature type="modified residue" description="N6-acetyllysine; alternate" evidence="4">
    <location>
        <position position="158"/>
    </location>
</feature>
<feature type="modified residue" description="N6-succinyllysine; alternate" evidence="4">
    <location>
        <position position="158"/>
    </location>
</feature>
<feature type="modified residue" description="N6-acetyllysine; alternate" evidence="9 23">
    <location>
        <position position="162"/>
    </location>
</feature>
<feature type="modified residue" description="N6-succinyllysine; alternate" evidence="4">
    <location>
        <position position="162"/>
    </location>
</feature>
<feature type="modified residue" description="N6-acetyllysine" evidence="23">
    <location>
        <position position="172"/>
    </location>
</feature>
<feature type="modified residue" description="N6-acetyllysine" evidence="4">
    <location>
        <position position="176"/>
    </location>
</feature>
<feature type="modified residue" description="N6-acetyllysine" evidence="23">
    <location>
        <position position="192"/>
    </location>
</feature>
<feature type="modified residue" description="N6-succinyllysine" evidence="4">
    <location>
        <position position="199"/>
    </location>
</feature>
<feature type="sequence variant" id="VAR_088523" description="In MC5DN7." evidence="6">
    <location>
        <begin position="12"/>
        <end position="213"/>
    </location>
</feature>
<feature type="sequence variant" id="VAR_011930" description="In dbSNP:rs4842." evidence="10 11">
    <original>K</original>
    <variation>R</variation>
    <location>
        <position position="98"/>
    </location>
</feature>
<feature type="mutagenesis site" description="Increased ATP levels." evidence="9">
    <original>K</original>
    <variation>R</variation>
    <location>
        <position position="162"/>
    </location>
</feature>
<feature type="helix" evidence="24">
    <location>
        <begin position="36"/>
        <end position="50"/>
    </location>
</feature>
<feature type="helix" evidence="24">
    <location>
        <begin position="55"/>
        <end position="68"/>
    </location>
</feature>
<feature type="helix" evidence="24">
    <location>
        <begin position="72"/>
        <end position="77"/>
    </location>
</feature>
<feature type="helix" evidence="24">
    <location>
        <begin position="85"/>
        <end position="97"/>
    </location>
</feature>
<feature type="helix" evidence="24">
    <location>
        <begin position="103"/>
        <end position="113"/>
    </location>
</feature>
<feature type="turn" evidence="24">
    <location>
        <begin position="114"/>
        <end position="116"/>
    </location>
</feature>
<feature type="helix" evidence="24">
    <location>
        <begin position="121"/>
        <end position="135"/>
    </location>
</feature>
<feature type="strand" evidence="24">
    <location>
        <begin position="138"/>
        <end position="147"/>
    </location>
</feature>
<feature type="helix" evidence="24">
    <location>
        <begin position="151"/>
        <end position="163"/>
    </location>
</feature>
<feature type="strand" evidence="24">
    <location>
        <begin position="170"/>
        <end position="173"/>
    </location>
</feature>
<feature type="helix" evidence="24">
    <location>
        <begin position="179"/>
        <end position="181"/>
    </location>
</feature>
<feature type="strand" evidence="24">
    <location>
        <begin position="183"/>
        <end position="189"/>
    </location>
</feature>
<feature type="strand" evidence="24">
    <location>
        <begin position="192"/>
        <end position="195"/>
    </location>
</feature>
<feature type="helix" evidence="24">
    <location>
        <begin position="198"/>
        <end position="209"/>
    </location>
</feature>
<keyword id="KW-0002">3D-structure</keyword>
<keyword id="KW-0007">Acetylation</keyword>
<keyword id="KW-0066">ATP synthesis</keyword>
<keyword id="KW-0903">Direct protein sequencing</keyword>
<keyword id="KW-0225">Disease variant</keyword>
<keyword id="KW-0375">Hydrogen ion transport</keyword>
<keyword id="KW-0406">Ion transport</keyword>
<keyword id="KW-0472">Membrane</keyword>
<keyword id="KW-0496">Mitochondrion</keyword>
<keyword id="KW-0999">Mitochondrion inner membrane</keyword>
<keyword id="KW-1274">Primary mitochondrial disease</keyword>
<keyword id="KW-1267">Proteomics identification</keyword>
<keyword id="KW-1185">Reference proteome</keyword>
<keyword id="KW-0809">Transit peptide</keyword>
<keyword id="KW-0813">Transport</keyword>
<keyword id="KW-0832">Ubl conjugation</keyword>
<protein>
    <recommendedName>
        <fullName evidence="12">ATP synthase peripheral stalk subunit OSCP, mitochondrial</fullName>
    </recommendedName>
    <alternativeName>
        <fullName evidence="12">ATP synthase subunit O</fullName>
    </alternativeName>
    <alternativeName>
        <fullName>Oligomycin sensitivity conferral protein</fullName>
        <shortName>OSCP</shortName>
    </alternativeName>
</protein>
<evidence type="ECO:0000250" key="1"/>
<evidence type="ECO:0000250" key="2">
    <source>
        <dbReference type="UniProtKB" id="P13621"/>
    </source>
</evidence>
<evidence type="ECO:0000250" key="3">
    <source>
        <dbReference type="UniProtKB" id="P19483"/>
    </source>
</evidence>
<evidence type="ECO:0000250" key="4">
    <source>
        <dbReference type="UniProtKB" id="Q9DB20"/>
    </source>
</evidence>
<evidence type="ECO:0000269" key="5">
    <source>
    </source>
</evidence>
<evidence type="ECO:0000269" key="6">
    <source>
    </source>
</evidence>
<evidence type="ECO:0000269" key="7">
    <source>
    </source>
</evidence>
<evidence type="ECO:0000269" key="8">
    <source>
    </source>
</evidence>
<evidence type="ECO:0000269" key="9">
    <source ref="11"/>
</evidence>
<evidence type="ECO:0000269" key="10">
    <source ref="2"/>
</evidence>
<evidence type="ECO:0000269" key="11">
    <source ref="5"/>
</evidence>
<evidence type="ECO:0000305" key="12"/>
<evidence type="ECO:0000305" key="13">
    <source>
    </source>
</evidence>
<evidence type="ECO:0000312" key="14">
    <source>
        <dbReference type="HGNC" id="HGNC:850"/>
    </source>
</evidence>
<evidence type="ECO:0007744" key="15">
    <source>
        <dbReference type="PDB" id="8H9E"/>
    </source>
</evidence>
<evidence type="ECO:0007744" key="16">
    <source>
        <dbReference type="PDB" id="8H9I"/>
    </source>
</evidence>
<evidence type="ECO:0007744" key="17">
    <source>
        <dbReference type="PDB" id="8H9L"/>
    </source>
</evidence>
<evidence type="ECO:0007744" key="18">
    <source>
        <dbReference type="PDB" id="8H9P"/>
    </source>
</evidence>
<evidence type="ECO:0007744" key="19">
    <source>
        <dbReference type="PDB" id="8H9S"/>
    </source>
</evidence>
<evidence type="ECO:0007744" key="20">
    <source>
        <dbReference type="PDB" id="8H9T"/>
    </source>
</evidence>
<evidence type="ECO:0007744" key="21">
    <source>
        <dbReference type="PDB" id="8H9U"/>
    </source>
</evidence>
<evidence type="ECO:0007744" key="22">
    <source>
        <dbReference type="PDB" id="8H9V"/>
    </source>
</evidence>
<evidence type="ECO:0007744" key="23">
    <source>
    </source>
</evidence>
<evidence type="ECO:0007829" key="24">
    <source>
        <dbReference type="PDB" id="8H9V"/>
    </source>
</evidence>
<name>ATPO_HUMAN</name>
<dbReference type="EMBL" id="X83218">
    <property type="protein sequence ID" value="CAA58219.1"/>
    <property type="molecule type" value="mRNA"/>
</dbReference>
<dbReference type="EMBL" id="BT019836">
    <property type="protein sequence ID" value="AAV38639.1"/>
    <property type="molecule type" value="mRNA"/>
</dbReference>
<dbReference type="EMBL" id="CR456822">
    <property type="protein sequence ID" value="CAG33103.1"/>
    <property type="molecule type" value="mRNA"/>
</dbReference>
<dbReference type="EMBL" id="AK222962">
    <property type="protein sequence ID" value="BAD96682.1"/>
    <property type="molecule type" value="mRNA"/>
</dbReference>
<dbReference type="EMBL" id="AK311796">
    <property type="protein sequence ID" value="BAG34739.1"/>
    <property type="molecule type" value="mRNA"/>
</dbReference>
<dbReference type="EMBL" id="CH471079">
    <property type="protein sequence ID" value="EAX09802.1"/>
    <property type="molecule type" value="Genomic_DNA"/>
</dbReference>
<dbReference type="EMBL" id="BC021233">
    <property type="protein sequence ID" value="AAH21233.1"/>
    <property type="molecule type" value="mRNA"/>
</dbReference>
<dbReference type="EMBL" id="BC022865">
    <property type="protein sequence ID" value="AAH22865.1"/>
    <property type="molecule type" value="mRNA"/>
</dbReference>
<dbReference type="CCDS" id="CCDS13634.1"/>
<dbReference type="RefSeq" id="NP_001688.1">
    <property type="nucleotide sequence ID" value="NM_001697.3"/>
</dbReference>
<dbReference type="PDB" id="8H9E">
    <property type="method" value="EM"/>
    <property type="resolution" value="2.53 A"/>
    <property type="chains" value="O=24-213"/>
</dbReference>
<dbReference type="PDB" id="8H9I">
    <property type="method" value="EM"/>
    <property type="resolution" value="2.77 A"/>
    <property type="chains" value="O=24-213"/>
</dbReference>
<dbReference type="PDB" id="8H9L">
    <property type="method" value="EM"/>
    <property type="resolution" value="2.61 A"/>
    <property type="chains" value="O=24-213"/>
</dbReference>
<dbReference type="PDB" id="8H9P">
    <property type="method" value="EM"/>
    <property type="resolution" value="3.02 A"/>
    <property type="chains" value="O=24-213"/>
</dbReference>
<dbReference type="PDB" id="8H9S">
    <property type="method" value="EM"/>
    <property type="resolution" value="2.53 A"/>
    <property type="chains" value="O=24-213"/>
</dbReference>
<dbReference type="PDB" id="8H9T">
    <property type="method" value="EM"/>
    <property type="resolution" value="2.77 A"/>
    <property type="chains" value="O=24-213"/>
</dbReference>
<dbReference type="PDB" id="8H9U">
    <property type="method" value="EM"/>
    <property type="resolution" value="2.61 A"/>
    <property type="chains" value="O=24-213"/>
</dbReference>
<dbReference type="PDB" id="8H9V">
    <property type="method" value="EM"/>
    <property type="resolution" value="3.02 A"/>
    <property type="chains" value="O=24-213"/>
</dbReference>
<dbReference type="PDB" id="8KI3">
    <property type="method" value="EM"/>
    <property type="resolution" value="2.89 A"/>
    <property type="chains" value="O=24-213"/>
</dbReference>
<dbReference type="PDBsum" id="8H9E"/>
<dbReference type="PDBsum" id="8H9I"/>
<dbReference type="PDBsum" id="8H9L"/>
<dbReference type="PDBsum" id="8H9P"/>
<dbReference type="PDBsum" id="8H9S"/>
<dbReference type="PDBsum" id="8H9T"/>
<dbReference type="PDBsum" id="8H9U"/>
<dbReference type="PDBsum" id="8H9V"/>
<dbReference type="PDBsum" id="8KI3"/>
<dbReference type="EMDB" id="EMD-34564"/>
<dbReference type="EMDB" id="EMD-34568"/>
<dbReference type="EMDB" id="EMD-34572"/>
<dbReference type="EMDB" id="EMD-34576"/>
<dbReference type="EMDB" id="EMD-34580"/>
<dbReference type="EMDB" id="EMD-34581"/>
<dbReference type="EMDB" id="EMD-34582"/>
<dbReference type="EMDB" id="EMD-34583"/>
<dbReference type="EMDB" id="EMD-37251"/>
<dbReference type="SASBDB" id="P48047"/>
<dbReference type="SMR" id="P48047"/>
<dbReference type="BioGRID" id="107021">
    <property type="interactions" value="358"/>
</dbReference>
<dbReference type="ComplexPortal" id="CPX-6151">
    <property type="entry name" value="Mitochondrial proton-transporting ATP synthase complex"/>
</dbReference>
<dbReference type="CORUM" id="P48047"/>
<dbReference type="FunCoup" id="P48047">
    <property type="interactions" value="2238"/>
</dbReference>
<dbReference type="IntAct" id="P48047">
    <property type="interactions" value="167"/>
</dbReference>
<dbReference type="MINT" id="P48047"/>
<dbReference type="STRING" id="9606.ENSP00000290299"/>
<dbReference type="DrugBank" id="DB11638">
    <property type="generic name" value="Artenimol"/>
</dbReference>
<dbReference type="DrugBank" id="DB01119">
    <property type="generic name" value="Diazoxide"/>
</dbReference>
<dbReference type="TCDB" id="3.A.2.1.15">
    <property type="family name" value="the h+- or na+-translocating f-type, v-type and a-type atpase (f-atpase) superfamily"/>
</dbReference>
<dbReference type="GlyGen" id="P48047">
    <property type="glycosylation" value="1 site, 1 O-linked glycan (1 site)"/>
</dbReference>
<dbReference type="iPTMnet" id="P48047"/>
<dbReference type="MetOSite" id="P48047"/>
<dbReference type="PhosphoSitePlus" id="P48047"/>
<dbReference type="SwissPalm" id="P48047"/>
<dbReference type="BioMuta" id="ATP5O"/>
<dbReference type="DMDM" id="1352049"/>
<dbReference type="OGP" id="P48047"/>
<dbReference type="jPOST" id="P48047"/>
<dbReference type="MassIVE" id="P48047"/>
<dbReference type="PaxDb" id="9606-ENSP00000290299"/>
<dbReference type="PeptideAtlas" id="P48047"/>
<dbReference type="ProteomicsDB" id="55837"/>
<dbReference type="Pumba" id="P48047"/>
<dbReference type="TopDownProteomics" id="P48047"/>
<dbReference type="Antibodypedia" id="35000">
    <property type="antibodies" value="211 antibodies from 31 providers"/>
</dbReference>
<dbReference type="DNASU" id="539"/>
<dbReference type="Ensembl" id="ENST00000290299.7">
    <property type="protein sequence ID" value="ENSP00000290299.2"/>
    <property type="gene ID" value="ENSG00000241837.7"/>
</dbReference>
<dbReference type="GeneID" id="539"/>
<dbReference type="KEGG" id="hsa:539"/>
<dbReference type="MANE-Select" id="ENST00000290299.7">
    <property type="protein sequence ID" value="ENSP00000290299.2"/>
    <property type="RefSeq nucleotide sequence ID" value="NM_001697.3"/>
    <property type="RefSeq protein sequence ID" value="NP_001688.1"/>
</dbReference>
<dbReference type="UCSC" id="uc002ytl.4">
    <property type="organism name" value="human"/>
</dbReference>
<dbReference type="AGR" id="HGNC:850"/>
<dbReference type="CTD" id="539"/>
<dbReference type="DisGeNET" id="539"/>
<dbReference type="GeneCards" id="ATP5PO"/>
<dbReference type="HGNC" id="HGNC:850">
    <property type="gene designation" value="ATP5PO"/>
</dbReference>
<dbReference type="HPA" id="ENSG00000241837">
    <property type="expression patterns" value="Tissue enhanced (tongue)"/>
</dbReference>
<dbReference type="MalaCards" id="ATP5PO"/>
<dbReference type="MIM" id="600828">
    <property type="type" value="gene"/>
</dbReference>
<dbReference type="MIM" id="620359">
    <property type="type" value="phenotype"/>
</dbReference>
<dbReference type="neXtProt" id="NX_P48047"/>
<dbReference type="OpenTargets" id="ENSG00000241837"/>
<dbReference type="PharmGKB" id="PA25144"/>
<dbReference type="VEuPathDB" id="HostDB:ENSG00000241837"/>
<dbReference type="eggNOG" id="KOG1662">
    <property type="taxonomic scope" value="Eukaryota"/>
</dbReference>
<dbReference type="GeneTree" id="ENSGT00390000015060"/>
<dbReference type="HOGENOM" id="CLU_085114_0_0_1"/>
<dbReference type="InParanoid" id="P48047"/>
<dbReference type="OMA" id="YSIEGLY"/>
<dbReference type="OrthoDB" id="1262810at2759"/>
<dbReference type="PAN-GO" id="P48047">
    <property type="GO annotations" value="4 GO annotations based on evolutionary models"/>
</dbReference>
<dbReference type="PhylomeDB" id="P48047"/>
<dbReference type="TreeFam" id="TF106241"/>
<dbReference type="BioCyc" id="MetaCyc:HS08368-MONOMER"/>
<dbReference type="PathwayCommons" id="P48047"/>
<dbReference type="Reactome" id="R-HSA-163210">
    <property type="pathway name" value="Formation of ATP by chemiosmotic coupling"/>
</dbReference>
<dbReference type="Reactome" id="R-HSA-8949613">
    <property type="pathway name" value="Cristae formation"/>
</dbReference>
<dbReference type="Reactome" id="R-HSA-9837999">
    <property type="pathway name" value="Mitochondrial protein degradation"/>
</dbReference>
<dbReference type="SignaLink" id="P48047"/>
<dbReference type="SIGNOR" id="P48047"/>
<dbReference type="BioGRID-ORCS" id="539">
    <property type="hits" value="364 hits in 1129 CRISPR screens"/>
</dbReference>
<dbReference type="ChiTaRS" id="ATP5PO">
    <property type="organism name" value="human"/>
</dbReference>
<dbReference type="GeneWiki" id="ATP5O"/>
<dbReference type="GenomeRNAi" id="539"/>
<dbReference type="Pharos" id="P48047">
    <property type="development level" value="Tbio"/>
</dbReference>
<dbReference type="PRO" id="PR:P48047"/>
<dbReference type="Proteomes" id="UP000005640">
    <property type="component" value="Chromosome 21"/>
</dbReference>
<dbReference type="RNAct" id="P48047">
    <property type="molecule type" value="protein"/>
</dbReference>
<dbReference type="Bgee" id="ENSG00000241837">
    <property type="expression patterns" value="Expressed in heart left ventricle and 104 other cell types or tissues"/>
</dbReference>
<dbReference type="ExpressionAtlas" id="P48047">
    <property type="expression patterns" value="baseline and differential"/>
</dbReference>
<dbReference type="GO" id="GO:0009986">
    <property type="term" value="C:cell surface"/>
    <property type="evidence" value="ECO:0007669"/>
    <property type="project" value="Ensembl"/>
</dbReference>
<dbReference type="GO" id="GO:0005743">
    <property type="term" value="C:mitochondrial inner membrane"/>
    <property type="evidence" value="ECO:0000304"/>
    <property type="project" value="Reactome"/>
</dbReference>
<dbReference type="GO" id="GO:0005739">
    <property type="term" value="C:mitochondrion"/>
    <property type="evidence" value="ECO:0000314"/>
    <property type="project" value="UniProtKB"/>
</dbReference>
<dbReference type="GO" id="GO:0005634">
    <property type="term" value="C:nucleus"/>
    <property type="evidence" value="ECO:0007005"/>
    <property type="project" value="UniProtKB"/>
</dbReference>
<dbReference type="GO" id="GO:0005886">
    <property type="term" value="C:plasma membrane"/>
    <property type="evidence" value="ECO:0000314"/>
    <property type="project" value="UniProtKB"/>
</dbReference>
<dbReference type="GO" id="GO:0045259">
    <property type="term" value="C:proton-transporting ATP synthase complex"/>
    <property type="evidence" value="ECO:0000314"/>
    <property type="project" value="UniProtKB"/>
</dbReference>
<dbReference type="GO" id="GO:0016887">
    <property type="term" value="F:ATP hydrolysis activity"/>
    <property type="evidence" value="ECO:0007669"/>
    <property type="project" value="Ensembl"/>
</dbReference>
<dbReference type="GO" id="GO:1903924">
    <property type="term" value="F:estradiol binding"/>
    <property type="evidence" value="ECO:0007669"/>
    <property type="project" value="Ensembl"/>
</dbReference>
<dbReference type="GO" id="GO:0044877">
    <property type="term" value="F:protein-containing complex binding"/>
    <property type="evidence" value="ECO:0007669"/>
    <property type="project" value="Ensembl"/>
</dbReference>
<dbReference type="GO" id="GO:0046933">
    <property type="term" value="F:proton-transporting ATP synthase activity, rotational mechanism"/>
    <property type="evidence" value="ECO:0007669"/>
    <property type="project" value="InterPro"/>
</dbReference>
<dbReference type="GO" id="GO:0006754">
    <property type="term" value="P:ATP biosynthetic process"/>
    <property type="evidence" value="ECO:0000303"/>
    <property type="project" value="UniProtKB"/>
</dbReference>
<dbReference type="GO" id="GO:0071320">
    <property type="term" value="P:cellular response to cAMP"/>
    <property type="evidence" value="ECO:0007669"/>
    <property type="project" value="Ensembl"/>
</dbReference>
<dbReference type="GO" id="GO:0071345">
    <property type="term" value="P:cellular response to cytokine stimulus"/>
    <property type="evidence" value="ECO:0007669"/>
    <property type="project" value="Ensembl"/>
</dbReference>
<dbReference type="GO" id="GO:0015986">
    <property type="term" value="P:proton motive force-driven ATP synthesis"/>
    <property type="evidence" value="ECO:0000303"/>
    <property type="project" value="ComplexPortal"/>
</dbReference>
<dbReference type="GO" id="GO:0042776">
    <property type="term" value="P:proton motive force-driven mitochondrial ATP synthesis"/>
    <property type="evidence" value="ECO:0000315"/>
    <property type="project" value="UniProtKB"/>
</dbReference>
<dbReference type="GO" id="GO:1902600">
    <property type="term" value="P:proton transmembrane transport"/>
    <property type="evidence" value="ECO:0000303"/>
    <property type="project" value="UniProtKB"/>
</dbReference>
<dbReference type="FunFam" id="1.10.520.20:FF:000002">
    <property type="entry name" value="ATP synthase subunit O, mitochondrial"/>
    <property type="match status" value="1"/>
</dbReference>
<dbReference type="Gene3D" id="1.10.520.20">
    <property type="entry name" value="N-terminal domain of the delta subunit of the F1F0-ATP synthase"/>
    <property type="match status" value="1"/>
</dbReference>
<dbReference type="HAMAP" id="MF_01416">
    <property type="entry name" value="ATP_synth_delta_bact"/>
    <property type="match status" value="1"/>
</dbReference>
<dbReference type="InterPro" id="IPR026015">
    <property type="entry name" value="ATP_synth_OSCP/delta_N_sf"/>
</dbReference>
<dbReference type="InterPro" id="IPR020781">
    <property type="entry name" value="ATPase_OSCP/d_CS"/>
</dbReference>
<dbReference type="InterPro" id="IPR000711">
    <property type="entry name" value="ATPase_OSCP/dsu"/>
</dbReference>
<dbReference type="NCBIfam" id="TIGR01145">
    <property type="entry name" value="ATP_synt_delta"/>
    <property type="match status" value="1"/>
</dbReference>
<dbReference type="PANTHER" id="PTHR11910">
    <property type="entry name" value="ATP SYNTHASE DELTA CHAIN"/>
    <property type="match status" value="1"/>
</dbReference>
<dbReference type="Pfam" id="PF00213">
    <property type="entry name" value="OSCP"/>
    <property type="match status" value="1"/>
</dbReference>
<dbReference type="PRINTS" id="PR00125">
    <property type="entry name" value="ATPASEDELTA"/>
</dbReference>
<dbReference type="SUPFAM" id="SSF47928">
    <property type="entry name" value="N-terminal domain of the delta subunit of the F1F0-ATP synthase"/>
    <property type="match status" value="1"/>
</dbReference>
<dbReference type="PROSITE" id="PS00389">
    <property type="entry name" value="ATPASE_DELTA"/>
    <property type="match status" value="1"/>
</dbReference>
<organism>
    <name type="scientific">Homo sapiens</name>
    <name type="common">Human</name>
    <dbReference type="NCBI Taxonomy" id="9606"/>
    <lineage>
        <taxon>Eukaryota</taxon>
        <taxon>Metazoa</taxon>
        <taxon>Chordata</taxon>
        <taxon>Craniata</taxon>
        <taxon>Vertebrata</taxon>
        <taxon>Euteleostomi</taxon>
        <taxon>Mammalia</taxon>
        <taxon>Eutheria</taxon>
        <taxon>Euarchontoglires</taxon>
        <taxon>Primates</taxon>
        <taxon>Haplorrhini</taxon>
        <taxon>Catarrhini</taxon>
        <taxon>Hominidae</taxon>
        <taxon>Homo</taxon>
    </lineage>
</organism>